<name>PAND_GLOC7</name>
<sequence length="156" mass="17283">MGKIRLMHAKLHRVRVTEANVGYIGSITIDPQLLDRVGILPLEEVDIVNLNNGKRFSTYVFPGEAGTGEVCPNGGAALLCQPGDLLIIYAYEERDRSEVLQQGHHARVIVADENNQIKQFFHQTLIPTEEGKGVSFHSDEIILNGQPKNNPILSEN</sequence>
<keyword id="KW-0068">Autocatalytic cleavage</keyword>
<keyword id="KW-0963">Cytoplasm</keyword>
<keyword id="KW-0210">Decarboxylase</keyword>
<keyword id="KW-0456">Lyase</keyword>
<keyword id="KW-0566">Pantothenate biosynthesis</keyword>
<keyword id="KW-0670">Pyruvate</keyword>
<keyword id="KW-1185">Reference proteome</keyword>
<keyword id="KW-0704">Schiff base</keyword>
<keyword id="KW-0865">Zymogen</keyword>
<reference key="1">
    <citation type="journal article" date="2011" name="MBio">
        <title>Novel metabolic attributes of the genus Cyanothece, comprising a group of unicellular nitrogen-fixing Cyanobacteria.</title>
        <authorList>
            <person name="Bandyopadhyay A."/>
            <person name="Elvitigala T."/>
            <person name="Welsh E."/>
            <person name="Stockel J."/>
            <person name="Liberton M."/>
            <person name="Min H."/>
            <person name="Sherman L.A."/>
            <person name="Pakrasi H.B."/>
        </authorList>
    </citation>
    <scope>NUCLEOTIDE SEQUENCE [LARGE SCALE GENOMIC DNA]</scope>
    <source>
        <strain>PCC 7424</strain>
    </source>
</reference>
<dbReference type="EC" id="4.1.1.11" evidence="1"/>
<dbReference type="EMBL" id="CP001291">
    <property type="protein sequence ID" value="ACK72690.1"/>
    <property type="molecule type" value="Genomic_DNA"/>
</dbReference>
<dbReference type="RefSeq" id="WP_015956275.1">
    <property type="nucleotide sequence ID" value="NC_011729.1"/>
</dbReference>
<dbReference type="SMR" id="B7K6Z1"/>
<dbReference type="STRING" id="65393.PCC7424_4323"/>
<dbReference type="KEGG" id="cyc:PCC7424_4323"/>
<dbReference type="eggNOG" id="COG0853">
    <property type="taxonomic scope" value="Bacteria"/>
</dbReference>
<dbReference type="HOGENOM" id="CLU_115305_1_1_3"/>
<dbReference type="OrthoDB" id="9803983at2"/>
<dbReference type="UniPathway" id="UPA00028">
    <property type="reaction ID" value="UER00002"/>
</dbReference>
<dbReference type="Proteomes" id="UP000002384">
    <property type="component" value="Chromosome"/>
</dbReference>
<dbReference type="GO" id="GO:0005829">
    <property type="term" value="C:cytosol"/>
    <property type="evidence" value="ECO:0007669"/>
    <property type="project" value="TreeGrafter"/>
</dbReference>
<dbReference type="GO" id="GO:0004068">
    <property type="term" value="F:aspartate 1-decarboxylase activity"/>
    <property type="evidence" value="ECO:0007669"/>
    <property type="project" value="UniProtKB-UniRule"/>
</dbReference>
<dbReference type="GO" id="GO:0006523">
    <property type="term" value="P:alanine biosynthetic process"/>
    <property type="evidence" value="ECO:0007669"/>
    <property type="project" value="InterPro"/>
</dbReference>
<dbReference type="GO" id="GO:0015940">
    <property type="term" value="P:pantothenate biosynthetic process"/>
    <property type="evidence" value="ECO:0007669"/>
    <property type="project" value="UniProtKB-UniRule"/>
</dbReference>
<dbReference type="CDD" id="cd06919">
    <property type="entry name" value="Asp_decarbox"/>
    <property type="match status" value="1"/>
</dbReference>
<dbReference type="Gene3D" id="2.40.40.20">
    <property type="match status" value="1"/>
</dbReference>
<dbReference type="HAMAP" id="MF_00446">
    <property type="entry name" value="PanD"/>
    <property type="match status" value="1"/>
</dbReference>
<dbReference type="InterPro" id="IPR009010">
    <property type="entry name" value="Asp_de-COase-like_dom_sf"/>
</dbReference>
<dbReference type="InterPro" id="IPR003190">
    <property type="entry name" value="Asp_decarbox"/>
</dbReference>
<dbReference type="NCBIfam" id="TIGR00223">
    <property type="entry name" value="panD"/>
    <property type="match status" value="1"/>
</dbReference>
<dbReference type="PANTHER" id="PTHR21012">
    <property type="entry name" value="ASPARTATE 1-DECARBOXYLASE"/>
    <property type="match status" value="1"/>
</dbReference>
<dbReference type="PANTHER" id="PTHR21012:SF0">
    <property type="entry name" value="ASPARTATE 1-DECARBOXYLASE"/>
    <property type="match status" value="1"/>
</dbReference>
<dbReference type="Pfam" id="PF02261">
    <property type="entry name" value="Asp_decarbox"/>
    <property type="match status" value="1"/>
</dbReference>
<dbReference type="SUPFAM" id="SSF50692">
    <property type="entry name" value="ADC-like"/>
    <property type="match status" value="1"/>
</dbReference>
<proteinExistence type="inferred from homology"/>
<accession>B7K6Z1</accession>
<evidence type="ECO:0000255" key="1">
    <source>
        <dbReference type="HAMAP-Rule" id="MF_00446"/>
    </source>
</evidence>
<organism>
    <name type="scientific">Gloeothece citriformis (strain PCC 7424)</name>
    <name type="common">Cyanothece sp. (strain PCC 7424)</name>
    <dbReference type="NCBI Taxonomy" id="65393"/>
    <lineage>
        <taxon>Bacteria</taxon>
        <taxon>Bacillati</taxon>
        <taxon>Cyanobacteriota</taxon>
        <taxon>Cyanophyceae</taxon>
        <taxon>Oscillatoriophycideae</taxon>
        <taxon>Chroococcales</taxon>
        <taxon>Aphanothecaceae</taxon>
        <taxon>Gloeothece</taxon>
        <taxon>Gloeothece citriformis</taxon>
    </lineage>
</organism>
<gene>
    <name evidence="1" type="primary">panD</name>
    <name type="ordered locus">PCC7424_4323</name>
</gene>
<feature type="chain" id="PRO_1000191972" description="Aspartate 1-decarboxylase beta chain" evidence="1">
    <location>
        <begin position="1"/>
        <end position="25"/>
    </location>
</feature>
<feature type="chain" id="PRO_1000191973" description="Aspartate 1-decarboxylase alpha chain" evidence="1">
    <location>
        <begin position="26"/>
        <end position="156"/>
    </location>
</feature>
<feature type="active site" description="Schiff-base intermediate with substrate; via pyruvic acid" evidence="1">
    <location>
        <position position="26"/>
    </location>
</feature>
<feature type="active site" description="Proton donor" evidence="1">
    <location>
        <position position="59"/>
    </location>
</feature>
<feature type="binding site" evidence="1">
    <location>
        <position position="58"/>
    </location>
    <ligand>
        <name>substrate</name>
    </ligand>
</feature>
<feature type="binding site" evidence="1">
    <location>
        <begin position="74"/>
        <end position="76"/>
    </location>
    <ligand>
        <name>substrate</name>
    </ligand>
</feature>
<feature type="modified residue" description="Pyruvic acid (Ser)" evidence="1">
    <location>
        <position position="26"/>
    </location>
</feature>
<comment type="function">
    <text evidence="1">Catalyzes the pyruvoyl-dependent decarboxylation of aspartate to produce beta-alanine.</text>
</comment>
<comment type="catalytic activity">
    <reaction evidence="1">
        <text>L-aspartate + H(+) = beta-alanine + CO2</text>
        <dbReference type="Rhea" id="RHEA:19497"/>
        <dbReference type="ChEBI" id="CHEBI:15378"/>
        <dbReference type="ChEBI" id="CHEBI:16526"/>
        <dbReference type="ChEBI" id="CHEBI:29991"/>
        <dbReference type="ChEBI" id="CHEBI:57966"/>
        <dbReference type="EC" id="4.1.1.11"/>
    </reaction>
</comment>
<comment type="cofactor">
    <cofactor evidence="1">
        <name>pyruvate</name>
        <dbReference type="ChEBI" id="CHEBI:15361"/>
    </cofactor>
    <text evidence="1">Binds 1 pyruvoyl group covalently per subunit.</text>
</comment>
<comment type="pathway">
    <text evidence="1">Cofactor biosynthesis; (R)-pantothenate biosynthesis; beta-alanine from L-aspartate: step 1/1.</text>
</comment>
<comment type="subunit">
    <text evidence="1">Heterooctamer of four alpha and four beta subunits.</text>
</comment>
<comment type="subcellular location">
    <subcellularLocation>
        <location evidence="1">Cytoplasm</location>
    </subcellularLocation>
</comment>
<comment type="PTM">
    <text evidence="1">Is synthesized initially as an inactive proenzyme, which is activated by self-cleavage at a specific serine bond to produce a beta-subunit with a hydroxyl group at its C-terminus and an alpha-subunit with a pyruvoyl group at its N-terminus.</text>
</comment>
<comment type="similarity">
    <text evidence="1">Belongs to the PanD family.</text>
</comment>
<protein>
    <recommendedName>
        <fullName evidence="1">Aspartate 1-decarboxylase</fullName>
        <ecNumber evidence="1">4.1.1.11</ecNumber>
    </recommendedName>
    <alternativeName>
        <fullName evidence="1">Aspartate alpha-decarboxylase</fullName>
    </alternativeName>
    <component>
        <recommendedName>
            <fullName evidence="1">Aspartate 1-decarboxylase beta chain</fullName>
        </recommendedName>
    </component>
    <component>
        <recommendedName>
            <fullName evidence="1">Aspartate 1-decarboxylase alpha chain</fullName>
        </recommendedName>
    </component>
</protein>